<name>CLPP_PEDPA</name>
<keyword id="KW-0963">Cytoplasm</keyword>
<keyword id="KW-0378">Hydrolase</keyword>
<keyword id="KW-0645">Protease</keyword>
<keyword id="KW-0720">Serine protease</keyword>
<reference key="1">
    <citation type="journal article" date="2006" name="Proc. Natl. Acad. Sci. U.S.A.">
        <title>Comparative genomics of the lactic acid bacteria.</title>
        <authorList>
            <person name="Makarova K.S."/>
            <person name="Slesarev A."/>
            <person name="Wolf Y.I."/>
            <person name="Sorokin A."/>
            <person name="Mirkin B."/>
            <person name="Koonin E.V."/>
            <person name="Pavlov A."/>
            <person name="Pavlova N."/>
            <person name="Karamychev V."/>
            <person name="Polouchine N."/>
            <person name="Shakhova V."/>
            <person name="Grigoriev I."/>
            <person name="Lou Y."/>
            <person name="Rohksar D."/>
            <person name="Lucas S."/>
            <person name="Huang K."/>
            <person name="Goodstein D.M."/>
            <person name="Hawkins T."/>
            <person name="Plengvidhya V."/>
            <person name="Welker D."/>
            <person name="Hughes J."/>
            <person name="Goh Y."/>
            <person name="Benson A."/>
            <person name="Baldwin K."/>
            <person name="Lee J.-H."/>
            <person name="Diaz-Muniz I."/>
            <person name="Dosti B."/>
            <person name="Smeianov V."/>
            <person name="Wechter W."/>
            <person name="Barabote R."/>
            <person name="Lorca G."/>
            <person name="Altermann E."/>
            <person name="Barrangou R."/>
            <person name="Ganesan B."/>
            <person name="Xie Y."/>
            <person name="Rawsthorne H."/>
            <person name="Tamir D."/>
            <person name="Parker C."/>
            <person name="Breidt F."/>
            <person name="Broadbent J.R."/>
            <person name="Hutkins R."/>
            <person name="O'Sullivan D."/>
            <person name="Steele J."/>
            <person name="Unlu G."/>
            <person name="Saier M.H. Jr."/>
            <person name="Klaenhammer T."/>
            <person name="Richardson P."/>
            <person name="Kozyavkin S."/>
            <person name="Weimer B.C."/>
            <person name="Mills D.A."/>
        </authorList>
    </citation>
    <scope>NUCLEOTIDE SEQUENCE [LARGE SCALE GENOMIC DNA]</scope>
    <source>
        <strain>ATCC 25745 / CCUG 21536 / LMG 10740 / 183-1w</strain>
    </source>
</reference>
<accession>Q03GX1</accession>
<dbReference type="EC" id="3.4.21.92" evidence="1"/>
<dbReference type="EMBL" id="CP000422">
    <property type="protein sequence ID" value="ABJ67551.1"/>
    <property type="molecule type" value="Genomic_DNA"/>
</dbReference>
<dbReference type="RefSeq" id="WP_002834073.1">
    <property type="nucleotide sequence ID" value="NC_008525.1"/>
</dbReference>
<dbReference type="SMR" id="Q03GX1"/>
<dbReference type="STRING" id="278197.PEPE_0455"/>
<dbReference type="MEROPS" id="S14.001"/>
<dbReference type="GeneID" id="33061870"/>
<dbReference type="KEGG" id="ppe:PEPE_0455"/>
<dbReference type="eggNOG" id="COG0740">
    <property type="taxonomic scope" value="Bacteria"/>
</dbReference>
<dbReference type="HOGENOM" id="CLU_058707_3_2_9"/>
<dbReference type="OrthoDB" id="9802800at2"/>
<dbReference type="Proteomes" id="UP000000773">
    <property type="component" value="Chromosome"/>
</dbReference>
<dbReference type="GO" id="GO:0005737">
    <property type="term" value="C:cytoplasm"/>
    <property type="evidence" value="ECO:0007669"/>
    <property type="project" value="UniProtKB-SubCell"/>
</dbReference>
<dbReference type="GO" id="GO:0009368">
    <property type="term" value="C:endopeptidase Clp complex"/>
    <property type="evidence" value="ECO:0007669"/>
    <property type="project" value="TreeGrafter"/>
</dbReference>
<dbReference type="GO" id="GO:0004176">
    <property type="term" value="F:ATP-dependent peptidase activity"/>
    <property type="evidence" value="ECO:0007669"/>
    <property type="project" value="InterPro"/>
</dbReference>
<dbReference type="GO" id="GO:0051117">
    <property type="term" value="F:ATPase binding"/>
    <property type="evidence" value="ECO:0007669"/>
    <property type="project" value="TreeGrafter"/>
</dbReference>
<dbReference type="GO" id="GO:0004252">
    <property type="term" value="F:serine-type endopeptidase activity"/>
    <property type="evidence" value="ECO:0007669"/>
    <property type="project" value="UniProtKB-UniRule"/>
</dbReference>
<dbReference type="GO" id="GO:0006515">
    <property type="term" value="P:protein quality control for misfolded or incompletely synthesized proteins"/>
    <property type="evidence" value="ECO:0007669"/>
    <property type="project" value="TreeGrafter"/>
</dbReference>
<dbReference type="CDD" id="cd07017">
    <property type="entry name" value="S14_ClpP_2"/>
    <property type="match status" value="1"/>
</dbReference>
<dbReference type="FunFam" id="3.90.226.10:FF:000001">
    <property type="entry name" value="ATP-dependent Clp protease proteolytic subunit"/>
    <property type="match status" value="1"/>
</dbReference>
<dbReference type="Gene3D" id="3.90.226.10">
    <property type="entry name" value="2-enoyl-CoA Hydratase, Chain A, domain 1"/>
    <property type="match status" value="1"/>
</dbReference>
<dbReference type="HAMAP" id="MF_00444">
    <property type="entry name" value="ClpP"/>
    <property type="match status" value="1"/>
</dbReference>
<dbReference type="InterPro" id="IPR001907">
    <property type="entry name" value="ClpP"/>
</dbReference>
<dbReference type="InterPro" id="IPR029045">
    <property type="entry name" value="ClpP/crotonase-like_dom_sf"/>
</dbReference>
<dbReference type="InterPro" id="IPR023562">
    <property type="entry name" value="ClpP/TepA"/>
</dbReference>
<dbReference type="InterPro" id="IPR033135">
    <property type="entry name" value="ClpP_His_AS"/>
</dbReference>
<dbReference type="InterPro" id="IPR018215">
    <property type="entry name" value="ClpP_Ser_AS"/>
</dbReference>
<dbReference type="NCBIfam" id="TIGR00493">
    <property type="entry name" value="clpP"/>
    <property type="match status" value="1"/>
</dbReference>
<dbReference type="NCBIfam" id="NF001368">
    <property type="entry name" value="PRK00277.1"/>
    <property type="match status" value="1"/>
</dbReference>
<dbReference type="NCBIfam" id="NF009205">
    <property type="entry name" value="PRK12553.1"/>
    <property type="match status" value="1"/>
</dbReference>
<dbReference type="PANTHER" id="PTHR10381">
    <property type="entry name" value="ATP-DEPENDENT CLP PROTEASE PROTEOLYTIC SUBUNIT"/>
    <property type="match status" value="1"/>
</dbReference>
<dbReference type="PANTHER" id="PTHR10381:SF70">
    <property type="entry name" value="ATP-DEPENDENT CLP PROTEASE PROTEOLYTIC SUBUNIT"/>
    <property type="match status" value="1"/>
</dbReference>
<dbReference type="Pfam" id="PF00574">
    <property type="entry name" value="CLP_protease"/>
    <property type="match status" value="1"/>
</dbReference>
<dbReference type="PRINTS" id="PR00127">
    <property type="entry name" value="CLPPROTEASEP"/>
</dbReference>
<dbReference type="SUPFAM" id="SSF52096">
    <property type="entry name" value="ClpP/crotonase"/>
    <property type="match status" value="1"/>
</dbReference>
<dbReference type="PROSITE" id="PS00382">
    <property type="entry name" value="CLP_PROTEASE_HIS"/>
    <property type="match status" value="1"/>
</dbReference>
<dbReference type="PROSITE" id="PS00381">
    <property type="entry name" value="CLP_PROTEASE_SER"/>
    <property type="match status" value="1"/>
</dbReference>
<organism>
    <name type="scientific">Pediococcus pentosaceus (strain ATCC 25745 / CCUG 21536 / LMG 10740 / 183-1w)</name>
    <dbReference type="NCBI Taxonomy" id="278197"/>
    <lineage>
        <taxon>Bacteria</taxon>
        <taxon>Bacillati</taxon>
        <taxon>Bacillota</taxon>
        <taxon>Bacilli</taxon>
        <taxon>Lactobacillales</taxon>
        <taxon>Lactobacillaceae</taxon>
        <taxon>Pediococcus</taxon>
    </lineage>
</organism>
<proteinExistence type="inferred from homology"/>
<evidence type="ECO:0000255" key="1">
    <source>
        <dbReference type="HAMAP-Rule" id="MF_00444"/>
    </source>
</evidence>
<protein>
    <recommendedName>
        <fullName evidence="1">ATP-dependent Clp protease proteolytic subunit</fullName>
        <ecNumber evidence="1">3.4.21.92</ecNumber>
    </recommendedName>
    <alternativeName>
        <fullName evidence="1">Endopeptidase Clp</fullName>
    </alternativeName>
</protein>
<gene>
    <name evidence="1" type="primary">clpP</name>
    <name type="ordered locus">PEPE_0455</name>
</gene>
<feature type="chain" id="PRO_1000026110" description="ATP-dependent Clp protease proteolytic subunit">
    <location>
        <begin position="1"/>
        <end position="197"/>
    </location>
</feature>
<feature type="active site" description="Nucleophile" evidence="1">
    <location>
        <position position="98"/>
    </location>
</feature>
<feature type="active site" evidence="1">
    <location>
        <position position="123"/>
    </location>
</feature>
<comment type="function">
    <text evidence="1">Cleaves peptides in various proteins in a process that requires ATP hydrolysis. Has a chymotrypsin-like activity. Plays a major role in the degradation of misfolded proteins.</text>
</comment>
<comment type="catalytic activity">
    <reaction evidence="1">
        <text>Hydrolysis of proteins to small peptides in the presence of ATP and magnesium. alpha-casein is the usual test substrate. In the absence of ATP, only oligopeptides shorter than five residues are hydrolyzed (such as succinyl-Leu-Tyr-|-NHMec, and Leu-Tyr-Leu-|-Tyr-Trp, in which cleavage of the -Tyr-|-Leu- and -Tyr-|-Trp bonds also occurs).</text>
        <dbReference type="EC" id="3.4.21.92"/>
    </reaction>
</comment>
<comment type="subunit">
    <text evidence="1">Fourteen ClpP subunits assemble into 2 heptameric rings which stack back to back to give a disk-like structure with a central cavity, resembling the structure of eukaryotic proteasomes.</text>
</comment>
<comment type="subcellular location">
    <subcellularLocation>
        <location evidence="1">Cytoplasm</location>
    </subcellularLocation>
</comment>
<comment type="similarity">
    <text evidence="1">Belongs to the peptidase S14 family.</text>
</comment>
<sequence>MNLVPTVIEQSSRGERAYDIYSRLLKDRIIMLSGPIDDDLANSIISQLLFLDAQDSEKDIYLYINSPGGVVTAGLAIYDTMNFIKSDVQTIVMGMAASMASVLASSGTKGKRFALPHSEVMIHQPSGGAQGQQTEIEIAAEQILKTRKELNTILAENSGQPLEKINIDTERDNYLSAQDAVEYGLIDGIMEKNANLK</sequence>